<keyword id="KW-0963">Cytoplasm</keyword>
<keyword id="KW-0378">Hydrolase</keyword>
<keyword id="KW-0479">Metal-binding</keyword>
<keyword id="KW-0547">Nucleotide-binding</keyword>
<keyword id="KW-1185">Reference proteome</keyword>
<accession>Q3ADI0</accession>
<protein>
    <recommendedName>
        <fullName evidence="1">5'-nucleotidase SurE</fullName>
        <ecNumber evidence="1">3.1.3.5</ecNumber>
    </recommendedName>
    <alternativeName>
        <fullName evidence="1">Nucleoside 5'-monophosphate phosphohydrolase</fullName>
    </alternativeName>
</protein>
<sequence>MRILLTNDDGIYAPGIKALRQVLEKEGKYELTVVAPDREKSATGHGITVHRPLRAFDITFKNSKVRGVSVDGTPADCVKLAVEALLDKPPDLVLSGINSGPNLGTDVLYSGTVSAAIEAMINGIPAIAISMGSFAFEDEEYLRAAEIFARLLPRILEHPWPRDTILNINIPNVPLEEIKGIAITRLGVRKYINVFEERKDPRGLSYYWMSGEAVNYENGQDTDTAALARKEISITPVHFDLTNYHYLNELKTWVKALEGALATG</sequence>
<feature type="chain" id="PRO_0000235603" description="5'-nucleotidase SurE">
    <location>
        <begin position="1"/>
        <end position="264"/>
    </location>
</feature>
<feature type="binding site" evidence="1">
    <location>
        <position position="8"/>
    </location>
    <ligand>
        <name>a divalent metal cation</name>
        <dbReference type="ChEBI" id="CHEBI:60240"/>
    </ligand>
</feature>
<feature type="binding site" evidence="1">
    <location>
        <position position="9"/>
    </location>
    <ligand>
        <name>a divalent metal cation</name>
        <dbReference type="ChEBI" id="CHEBI:60240"/>
    </ligand>
</feature>
<feature type="binding site" evidence="1">
    <location>
        <position position="41"/>
    </location>
    <ligand>
        <name>a divalent metal cation</name>
        <dbReference type="ChEBI" id="CHEBI:60240"/>
    </ligand>
</feature>
<feature type="binding site" evidence="1">
    <location>
        <position position="98"/>
    </location>
    <ligand>
        <name>a divalent metal cation</name>
        <dbReference type="ChEBI" id="CHEBI:60240"/>
    </ligand>
</feature>
<dbReference type="EC" id="3.1.3.5" evidence="1"/>
<dbReference type="EMBL" id="CP000141">
    <property type="protein sequence ID" value="ABB14913.1"/>
    <property type="molecule type" value="Genomic_DNA"/>
</dbReference>
<dbReference type="RefSeq" id="WP_011343880.1">
    <property type="nucleotide sequence ID" value="NC_007503.1"/>
</dbReference>
<dbReference type="SMR" id="Q3ADI0"/>
<dbReference type="STRING" id="246194.CHY_0957"/>
<dbReference type="KEGG" id="chy:CHY_0957"/>
<dbReference type="eggNOG" id="COG0496">
    <property type="taxonomic scope" value="Bacteria"/>
</dbReference>
<dbReference type="HOGENOM" id="CLU_045192_1_3_9"/>
<dbReference type="InParanoid" id="Q3ADI0"/>
<dbReference type="OrthoDB" id="9780815at2"/>
<dbReference type="Proteomes" id="UP000002706">
    <property type="component" value="Chromosome"/>
</dbReference>
<dbReference type="GO" id="GO:0005737">
    <property type="term" value="C:cytoplasm"/>
    <property type="evidence" value="ECO:0007669"/>
    <property type="project" value="UniProtKB-SubCell"/>
</dbReference>
<dbReference type="GO" id="GO:0008254">
    <property type="term" value="F:3'-nucleotidase activity"/>
    <property type="evidence" value="ECO:0007669"/>
    <property type="project" value="TreeGrafter"/>
</dbReference>
<dbReference type="GO" id="GO:0008253">
    <property type="term" value="F:5'-nucleotidase activity"/>
    <property type="evidence" value="ECO:0007669"/>
    <property type="project" value="UniProtKB-UniRule"/>
</dbReference>
<dbReference type="GO" id="GO:0004309">
    <property type="term" value="F:exopolyphosphatase activity"/>
    <property type="evidence" value="ECO:0007669"/>
    <property type="project" value="TreeGrafter"/>
</dbReference>
<dbReference type="GO" id="GO:0046872">
    <property type="term" value="F:metal ion binding"/>
    <property type="evidence" value="ECO:0007669"/>
    <property type="project" value="UniProtKB-UniRule"/>
</dbReference>
<dbReference type="GO" id="GO:0000166">
    <property type="term" value="F:nucleotide binding"/>
    <property type="evidence" value="ECO:0007669"/>
    <property type="project" value="UniProtKB-KW"/>
</dbReference>
<dbReference type="FunFam" id="3.40.1210.10:FF:000001">
    <property type="entry name" value="5'/3'-nucleotidase SurE"/>
    <property type="match status" value="1"/>
</dbReference>
<dbReference type="Gene3D" id="3.40.1210.10">
    <property type="entry name" value="Survival protein SurE-like phosphatase/nucleotidase"/>
    <property type="match status" value="1"/>
</dbReference>
<dbReference type="HAMAP" id="MF_00060">
    <property type="entry name" value="SurE"/>
    <property type="match status" value="1"/>
</dbReference>
<dbReference type="InterPro" id="IPR030048">
    <property type="entry name" value="SurE"/>
</dbReference>
<dbReference type="InterPro" id="IPR002828">
    <property type="entry name" value="SurE-like_Pase/nucleotidase"/>
</dbReference>
<dbReference type="InterPro" id="IPR036523">
    <property type="entry name" value="SurE-like_sf"/>
</dbReference>
<dbReference type="NCBIfam" id="NF001490">
    <property type="entry name" value="PRK00346.1-4"/>
    <property type="match status" value="1"/>
</dbReference>
<dbReference type="NCBIfam" id="NF001492">
    <property type="entry name" value="PRK00346.2-2"/>
    <property type="match status" value="1"/>
</dbReference>
<dbReference type="NCBIfam" id="TIGR00087">
    <property type="entry name" value="surE"/>
    <property type="match status" value="1"/>
</dbReference>
<dbReference type="PANTHER" id="PTHR30457">
    <property type="entry name" value="5'-NUCLEOTIDASE SURE"/>
    <property type="match status" value="1"/>
</dbReference>
<dbReference type="PANTHER" id="PTHR30457:SF12">
    <property type="entry name" value="5'_3'-NUCLEOTIDASE SURE"/>
    <property type="match status" value="1"/>
</dbReference>
<dbReference type="Pfam" id="PF01975">
    <property type="entry name" value="SurE"/>
    <property type="match status" value="1"/>
</dbReference>
<dbReference type="SUPFAM" id="SSF64167">
    <property type="entry name" value="SurE-like"/>
    <property type="match status" value="1"/>
</dbReference>
<name>SURE_CARHZ</name>
<gene>
    <name evidence="1" type="primary">surE</name>
    <name type="ordered locus">CHY_0957</name>
</gene>
<reference key="1">
    <citation type="journal article" date="2005" name="PLoS Genet.">
        <title>Life in hot carbon monoxide: the complete genome sequence of Carboxydothermus hydrogenoformans Z-2901.</title>
        <authorList>
            <person name="Wu M."/>
            <person name="Ren Q."/>
            <person name="Durkin A.S."/>
            <person name="Daugherty S.C."/>
            <person name="Brinkac L.M."/>
            <person name="Dodson R.J."/>
            <person name="Madupu R."/>
            <person name="Sullivan S.A."/>
            <person name="Kolonay J.F."/>
            <person name="Nelson W.C."/>
            <person name="Tallon L.J."/>
            <person name="Jones K.M."/>
            <person name="Ulrich L.E."/>
            <person name="Gonzalez J.M."/>
            <person name="Zhulin I.B."/>
            <person name="Robb F.T."/>
            <person name="Eisen J.A."/>
        </authorList>
    </citation>
    <scope>NUCLEOTIDE SEQUENCE [LARGE SCALE GENOMIC DNA]</scope>
    <source>
        <strain>ATCC BAA-161 / DSM 6008 / Z-2901</strain>
    </source>
</reference>
<evidence type="ECO:0000255" key="1">
    <source>
        <dbReference type="HAMAP-Rule" id="MF_00060"/>
    </source>
</evidence>
<comment type="function">
    <text evidence="1">Nucleotidase that shows phosphatase activity on nucleoside 5'-monophosphates.</text>
</comment>
<comment type="catalytic activity">
    <reaction evidence="1">
        <text>a ribonucleoside 5'-phosphate + H2O = a ribonucleoside + phosphate</text>
        <dbReference type="Rhea" id="RHEA:12484"/>
        <dbReference type="ChEBI" id="CHEBI:15377"/>
        <dbReference type="ChEBI" id="CHEBI:18254"/>
        <dbReference type="ChEBI" id="CHEBI:43474"/>
        <dbReference type="ChEBI" id="CHEBI:58043"/>
        <dbReference type="EC" id="3.1.3.5"/>
    </reaction>
</comment>
<comment type="cofactor">
    <cofactor evidence="1">
        <name>a divalent metal cation</name>
        <dbReference type="ChEBI" id="CHEBI:60240"/>
    </cofactor>
    <text evidence="1">Binds 1 divalent metal cation per subunit.</text>
</comment>
<comment type="subcellular location">
    <subcellularLocation>
        <location evidence="1">Cytoplasm</location>
    </subcellularLocation>
</comment>
<comment type="similarity">
    <text evidence="1">Belongs to the SurE nucleotidase family.</text>
</comment>
<proteinExistence type="inferred from homology"/>
<organism>
    <name type="scientific">Carboxydothermus hydrogenoformans (strain ATCC BAA-161 / DSM 6008 / Z-2901)</name>
    <dbReference type="NCBI Taxonomy" id="246194"/>
    <lineage>
        <taxon>Bacteria</taxon>
        <taxon>Bacillati</taxon>
        <taxon>Bacillota</taxon>
        <taxon>Clostridia</taxon>
        <taxon>Thermoanaerobacterales</taxon>
        <taxon>Thermoanaerobacteraceae</taxon>
        <taxon>Carboxydothermus</taxon>
    </lineage>
</organism>